<dbReference type="EC" id="3.4.14.5"/>
<dbReference type="EMBL" id="GL629990">
    <property type="protein sequence ID" value="EFW99394.1"/>
    <property type="molecule type" value="Genomic_DNA"/>
</dbReference>
<dbReference type="RefSeq" id="XP_014168877.1">
    <property type="nucleotide sequence ID" value="XM_014313402.1"/>
</dbReference>
<dbReference type="SMR" id="F0XS04"/>
<dbReference type="FunCoup" id="F0XS04">
    <property type="interactions" value="286"/>
</dbReference>
<dbReference type="STRING" id="655863.F0XS04"/>
<dbReference type="ESTHER" id="grocl-dapb">
    <property type="family name" value="DPP4N_Peptidase_S9"/>
</dbReference>
<dbReference type="GlyCosmos" id="F0XS04">
    <property type="glycosylation" value="4 sites, No reported glycans"/>
</dbReference>
<dbReference type="GeneID" id="25981342"/>
<dbReference type="eggNOG" id="KOG2100">
    <property type="taxonomic scope" value="Eukaryota"/>
</dbReference>
<dbReference type="HOGENOM" id="CLU_006105_0_1_1"/>
<dbReference type="InParanoid" id="F0XS04"/>
<dbReference type="OrthoDB" id="16520at2759"/>
<dbReference type="Proteomes" id="UP000007796">
    <property type="component" value="Unassembled WGS sequence"/>
</dbReference>
<dbReference type="GO" id="GO:0000329">
    <property type="term" value="C:fungal-type vacuole membrane"/>
    <property type="evidence" value="ECO:0007669"/>
    <property type="project" value="EnsemblFungi"/>
</dbReference>
<dbReference type="GO" id="GO:0005886">
    <property type="term" value="C:plasma membrane"/>
    <property type="evidence" value="ECO:0007669"/>
    <property type="project" value="TreeGrafter"/>
</dbReference>
<dbReference type="GO" id="GO:0004177">
    <property type="term" value="F:aminopeptidase activity"/>
    <property type="evidence" value="ECO:0007669"/>
    <property type="project" value="UniProtKB-KW"/>
</dbReference>
<dbReference type="GO" id="GO:0008239">
    <property type="term" value="F:dipeptidyl-peptidase activity"/>
    <property type="evidence" value="ECO:0007669"/>
    <property type="project" value="UniProtKB-EC"/>
</dbReference>
<dbReference type="GO" id="GO:0008236">
    <property type="term" value="F:serine-type peptidase activity"/>
    <property type="evidence" value="ECO:0007669"/>
    <property type="project" value="UniProtKB-KW"/>
</dbReference>
<dbReference type="GO" id="GO:0006508">
    <property type="term" value="P:proteolysis"/>
    <property type="evidence" value="ECO:0007669"/>
    <property type="project" value="UniProtKB-KW"/>
</dbReference>
<dbReference type="FunFam" id="3.40.50.1820:FF:000003">
    <property type="entry name" value="Dipeptidyl peptidase 4"/>
    <property type="match status" value="1"/>
</dbReference>
<dbReference type="Gene3D" id="3.40.50.1820">
    <property type="entry name" value="alpha/beta hydrolase"/>
    <property type="match status" value="1"/>
</dbReference>
<dbReference type="Gene3D" id="2.140.10.30">
    <property type="entry name" value="Dipeptidylpeptidase IV, N-terminal domain"/>
    <property type="match status" value="1"/>
</dbReference>
<dbReference type="InterPro" id="IPR029058">
    <property type="entry name" value="AB_hydrolase_fold"/>
</dbReference>
<dbReference type="InterPro" id="IPR001375">
    <property type="entry name" value="Peptidase_S9_cat"/>
</dbReference>
<dbReference type="InterPro" id="IPR002469">
    <property type="entry name" value="Peptidase_S9B_N"/>
</dbReference>
<dbReference type="InterPro" id="IPR050278">
    <property type="entry name" value="Serine_Prot_S9B/DPPIV"/>
</dbReference>
<dbReference type="PANTHER" id="PTHR11731:SF200">
    <property type="entry name" value="DIPEPTIDYL PEPTIDASE 10, ISOFORM B"/>
    <property type="match status" value="1"/>
</dbReference>
<dbReference type="PANTHER" id="PTHR11731">
    <property type="entry name" value="PROTEASE FAMILY S9B,C DIPEPTIDYL-PEPTIDASE IV-RELATED"/>
    <property type="match status" value="1"/>
</dbReference>
<dbReference type="Pfam" id="PF00930">
    <property type="entry name" value="DPPIV_N"/>
    <property type="match status" value="1"/>
</dbReference>
<dbReference type="Pfam" id="PF00326">
    <property type="entry name" value="Peptidase_S9"/>
    <property type="match status" value="1"/>
</dbReference>
<dbReference type="SUPFAM" id="SSF53474">
    <property type="entry name" value="alpha/beta-Hydrolases"/>
    <property type="match status" value="1"/>
</dbReference>
<dbReference type="SUPFAM" id="SSF82171">
    <property type="entry name" value="DPP6 N-terminal domain-like"/>
    <property type="match status" value="1"/>
</dbReference>
<sequence length="975" mass="106581">MAEHGHNMWEEEPSKGRDSLDSDSSASTTSLVFDQISERVAAESGTTKGKRMRYGHDEADLGARLSELDDEDPLKDEASGDYDLETGPFLGGHGHNSNHDGLSAASGSAGKTQGGYRMMDRGLRRVLIIASLVFVTAWVGGLFIYISHKSYLHGSEFEHDPQATVSRGSLRKITREQVDNGFWRPVKASIAWVAGPAGEDGLLLETNASGASDKAYLTVQDVRSLQQGLDASTEAAVAAARRTLVEKSTFTFAGKTYRIGSSKASKDMSKVLLGVDVQSNWRHSSTAAYFILEVATQTVQPLIPGEVSARVQLAQWSPQSDAIAFTRDNNLYFRQVVAGSSSSAEDADSVIKQITTDGGPELFYGVPDWVYEEEVLGGASATWWSPDGRYIAFLRTNETGVPEYPVQYFLHRPSGAAPAEGEENYPEVRQIKYPKAGAHNPVVDLQFFDVGRGDSFSVAVSGEFADENRLITTVLWAGAQKVLVKETNRVSTVMRVVVVDVAARSGQAVRTVDVGAIDGGWFEISQRTRFIPADPARQRPDDGYIDTIVHNNGDHLAYFSPPENPEPIMLTAGPDWEVDDAPAAVDLERNLVYFLATIQGITQRHLYSVRLLDGGGLSPLTNTSEPGFYGASFSAGVGAGYVLLEYGGPNIPWQKVMNTPAAAAAAAAGSADVSKQMPFVHVLEDNHELAERARQYALPLLVRGTFDVKGHDEGVGAGKLNYLERRPPHFDPSKKYPVLFQQYSGPGSQEVTHEFSVDFQSYVAASLGYVVVTVDPRGTGFAGRSNRVVVRGRLGVVESHDHIAAAQHWASLPYIDGDRLAIWGWSYGGFTTLKTLEQDAGRTFRYGIAVAPVTDWRFYDSVYTERYMDTPQANAVGYDTGAVTNASALAQNVRFLIMHGIADDNVHLQNSLALLDRLDIEGVSNYDVHVFPDSDHSIYFHNGRQIVYDKLENWLINAFNGEWLKIDNAKPQGKR</sequence>
<reference key="1">
    <citation type="journal article" date="2011" name="Proc. Natl. Acad. Sci. U.S.A.">
        <title>Genome and transcriptome analyses of the mountain pine beetle-fungal symbiont Grosmannia clavigera, a lodgepole pine pathogen.</title>
        <authorList>
            <person name="DiGuistini S."/>
            <person name="Wang Y."/>
            <person name="Liao N.Y."/>
            <person name="Taylor G."/>
            <person name="Tanguay P."/>
            <person name="Feau N."/>
            <person name="Henrissat B."/>
            <person name="Chan S.K."/>
            <person name="Hesse-Orce U."/>
            <person name="Alamouti S.M."/>
            <person name="Tsui C.K.M."/>
            <person name="Docking R.T."/>
            <person name="Levasseur A."/>
            <person name="Haridas S."/>
            <person name="Robertson G."/>
            <person name="Birol I."/>
            <person name="Holt R.A."/>
            <person name="Marra M.A."/>
            <person name="Hamelin R.C."/>
            <person name="Hirst M."/>
            <person name="Jones S.J.M."/>
            <person name="Bohlmann J."/>
            <person name="Breuil C."/>
        </authorList>
    </citation>
    <scope>NUCLEOTIDE SEQUENCE [LARGE SCALE GENOMIC DNA]</scope>
    <source>
        <strain>kw1407 / UAMH 11150</strain>
    </source>
</reference>
<protein>
    <recommendedName>
        <fullName>Probable dipeptidyl-aminopeptidase B</fullName>
        <shortName>DPAP B</shortName>
        <ecNumber>3.4.14.5</ecNumber>
    </recommendedName>
</protein>
<proteinExistence type="inferred from homology"/>
<comment type="function">
    <text evidence="1">Type IV dipeptidyl-peptidase which removes N-terminal dipeptides sequentially from polypeptides having unsubstituted N-termini provided that the penultimate residue is proline.</text>
</comment>
<comment type="catalytic activity">
    <reaction>
        <text>Release of an N-terminal dipeptide, Xaa-Yaa-|-Zaa-, from a polypeptide, preferentially when Yaa is Pro, provided Zaa is neither Pro nor hydroxyproline.</text>
        <dbReference type="EC" id="3.4.14.5"/>
    </reaction>
</comment>
<comment type="subcellular location">
    <subcellularLocation>
        <location evidence="1">Vacuole membrane</location>
        <topology evidence="1">Single-pass type II membrane protein</topology>
    </subcellularLocation>
    <text evidence="1">Lysosome-like vacuoles.</text>
</comment>
<comment type="similarity">
    <text evidence="4">Belongs to the peptidase S9B family.</text>
</comment>
<evidence type="ECO:0000250" key="1"/>
<evidence type="ECO:0000255" key="2"/>
<evidence type="ECO:0000256" key="3">
    <source>
        <dbReference type="SAM" id="MobiDB-lite"/>
    </source>
</evidence>
<evidence type="ECO:0000305" key="4"/>
<name>DAPB_GROCL</name>
<accession>F0XS04</accession>
<gene>
    <name type="primary">DAPB</name>
    <name type="ORF">CMQ_7762</name>
</gene>
<feature type="chain" id="PRO_0000412146" description="Probable dipeptidyl-aminopeptidase B">
    <location>
        <begin position="1"/>
        <end position="975"/>
    </location>
</feature>
<feature type="topological domain" description="Cytoplasmic" evidence="2">
    <location>
        <begin position="1"/>
        <end position="125"/>
    </location>
</feature>
<feature type="transmembrane region" description="Helical; Signal-anchor for type II membrane protein" evidence="2">
    <location>
        <begin position="126"/>
        <end position="146"/>
    </location>
</feature>
<feature type="topological domain" description="Vacuolar" evidence="2">
    <location>
        <begin position="147"/>
        <end position="975"/>
    </location>
</feature>
<feature type="region of interest" description="Disordered" evidence="3">
    <location>
        <begin position="1"/>
        <end position="111"/>
    </location>
</feature>
<feature type="compositionally biased region" description="Basic and acidic residues" evidence="3">
    <location>
        <begin position="1"/>
        <end position="20"/>
    </location>
</feature>
<feature type="compositionally biased region" description="Low complexity" evidence="3">
    <location>
        <begin position="22"/>
        <end position="31"/>
    </location>
</feature>
<feature type="compositionally biased region" description="Acidic residues" evidence="3">
    <location>
        <begin position="68"/>
        <end position="84"/>
    </location>
</feature>
<feature type="active site" description="Charge relay system" evidence="1">
    <location>
        <position position="826"/>
    </location>
</feature>
<feature type="active site" description="Charge relay system" evidence="1">
    <location>
        <position position="903"/>
    </location>
</feature>
<feature type="active site" description="Charge relay system" evidence="1">
    <location>
        <position position="936"/>
    </location>
</feature>
<feature type="glycosylation site" description="N-linked (GlcNAc...) asparagine" evidence="2">
    <location>
        <position position="207"/>
    </location>
</feature>
<feature type="glycosylation site" description="N-linked (GlcNAc...) asparagine" evidence="2">
    <location>
        <position position="397"/>
    </location>
</feature>
<feature type="glycosylation site" description="N-linked (GlcNAc...) asparagine" evidence="2">
    <location>
        <position position="622"/>
    </location>
</feature>
<feature type="glycosylation site" description="N-linked (GlcNAc...) asparagine" evidence="2">
    <location>
        <position position="885"/>
    </location>
</feature>
<keyword id="KW-0031">Aminopeptidase</keyword>
<keyword id="KW-0325">Glycoprotein</keyword>
<keyword id="KW-0378">Hydrolase</keyword>
<keyword id="KW-0472">Membrane</keyword>
<keyword id="KW-0645">Protease</keyword>
<keyword id="KW-1185">Reference proteome</keyword>
<keyword id="KW-0720">Serine protease</keyword>
<keyword id="KW-0735">Signal-anchor</keyword>
<keyword id="KW-0812">Transmembrane</keyword>
<keyword id="KW-1133">Transmembrane helix</keyword>
<keyword id="KW-0926">Vacuole</keyword>
<organism>
    <name type="scientific">Grosmannia clavigera (strain kw1407 / UAMH 11150)</name>
    <name type="common">Blue stain fungus</name>
    <name type="synonym">Graphiocladiella clavigera</name>
    <dbReference type="NCBI Taxonomy" id="655863"/>
    <lineage>
        <taxon>Eukaryota</taxon>
        <taxon>Fungi</taxon>
        <taxon>Dikarya</taxon>
        <taxon>Ascomycota</taxon>
        <taxon>Pezizomycotina</taxon>
        <taxon>Sordariomycetes</taxon>
        <taxon>Sordariomycetidae</taxon>
        <taxon>Ophiostomatales</taxon>
        <taxon>Ophiostomataceae</taxon>
        <taxon>Leptographium</taxon>
    </lineage>
</organism>